<evidence type="ECO:0000255" key="1">
    <source>
        <dbReference type="PROSITE-ProRule" id="PRU10092"/>
    </source>
</evidence>
<evidence type="ECO:0000255" key="2">
    <source>
        <dbReference type="PROSITE-ProRule" id="PRU10093"/>
    </source>
</evidence>
<evidence type="ECO:0000256" key="3">
    <source>
        <dbReference type="SAM" id="MobiDB-lite"/>
    </source>
</evidence>
<evidence type="ECO:0000305" key="4"/>
<sequence>MLLNPDQILNLVRKVYEVDIKQFYSQLRLKNLRGLLDHAAHLFNVYLRDLEINQEMEALTAFIIGCYYLYLIIPQSLQFQTRNNLYSSYAKLKNDYQDEHVMGYVLKVVRDESTVIVDRYLAESNGICRTIKRKRAYSLPLRPLPVHMASLSIHNKFDGSLHEIPNELTKPTNDNSKEDIVRESNQIASSNKLEAGSEVAYYTSKEALSKPSYLKLSTGKDALFKTLSSPATAPPVHSLEVSSQIRDSSQDSSSSLSKVEKPKEEEGKIEAIESSAPKAYNLPVIEDSNDLLSELSITGLQNPCNTCYINSIIQCLFGTTLFRDLFLTKKYRLFLNTNKYPKEVQLSRSIYVLFKKMYLNGGRAIIPNRFLKMCKKLRPDLNIPDDQQDTQEFLLIVLARIHEELSNENVVKYYPDLVSYDANALQVNPSKYEKWYERNVITDGLSPIDHIYRGQLENILKCQRCGNSSYSYSTFYVLSLAIPKLSLYSFTSKSRKIKLEDCINLFTGDEELSGDNAWDCPNCRITDSKSKKEEITSQKKKSTIFGFHSRSRSKSPHHHHHHHHSSDDSTKNAKKRNSKKLTTIKSLDFIVLPPILVIHLSRFYYDLTKKNSTVITYPLILNIILKNGKVIRYKLYGTVNHSGNLINGHYTSVVNKEKSHEIGLNRQVWVTFDDDYIQQHRKDRNNFEAGKTEMSSDEVYVLFYERMDEENYEEEFC</sequence>
<proteinExistence type="inferred from homology"/>
<reference key="1">
    <citation type="journal article" date="1994" name="Nature">
        <title>Complete DNA sequence of yeast chromosome XI.</title>
        <authorList>
            <person name="Dujon B."/>
            <person name="Alexandraki D."/>
            <person name="Andre B."/>
            <person name="Ansorge W."/>
            <person name="Baladron V."/>
            <person name="Ballesta J.P.G."/>
            <person name="Banrevi A."/>
            <person name="Bolle P.-A."/>
            <person name="Bolotin-Fukuhara M."/>
            <person name="Bossier P."/>
            <person name="Bou G."/>
            <person name="Boyer J."/>
            <person name="Buitrago M.J."/>
            <person name="Cheret G."/>
            <person name="Colleaux L."/>
            <person name="Daignan-Fornier B."/>
            <person name="del Rey F."/>
            <person name="Dion C."/>
            <person name="Domdey H."/>
            <person name="Duesterhoeft A."/>
            <person name="Duesterhus S."/>
            <person name="Entian K.-D."/>
            <person name="Erfle H."/>
            <person name="Esteban P.F."/>
            <person name="Feldmann H."/>
            <person name="Fernandes L."/>
            <person name="Fobo G.M."/>
            <person name="Fritz C."/>
            <person name="Fukuhara H."/>
            <person name="Gabel C."/>
            <person name="Gaillon L."/>
            <person name="Garcia-Cantalejo J.M."/>
            <person name="Garcia-Ramirez J.J."/>
            <person name="Gent M.E."/>
            <person name="Ghazvini M."/>
            <person name="Goffeau A."/>
            <person name="Gonzalez A."/>
            <person name="Grothues D."/>
            <person name="Guerreiro P."/>
            <person name="Hegemann J.H."/>
            <person name="Hewitt N."/>
            <person name="Hilger F."/>
            <person name="Hollenberg C.P."/>
            <person name="Horaitis O."/>
            <person name="Indge K.J."/>
            <person name="Jacquier A."/>
            <person name="James C.M."/>
            <person name="Jauniaux J.-C."/>
            <person name="Jimenez A."/>
            <person name="Keuchel H."/>
            <person name="Kirchrath L."/>
            <person name="Kleine K."/>
            <person name="Koetter P."/>
            <person name="Legrain P."/>
            <person name="Liebl S."/>
            <person name="Louis E.J."/>
            <person name="Maia e Silva A."/>
            <person name="Marck C."/>
            <person name="Monnier A.-L."/>
            <person name="Moestl D."/>
            <person name="Mueller S."/>
            <person name="Obermaier B."/>
            <person name="Oliver S.G."/>
            <person name="Pallier C."/>
            <person name="Pascolo S."/>
            <person name="Pfeiffer F."/>
            <person name="Philippsen P."/>
            <person name="Planta R.J."/>
            <person name="Pohl F.M."/>
            <person name="Pohl T.M."/>
            <person name="Poehlmann R."/>
            <person name="Portetelle D."/>
            <person name="Purnelle B."/>
            <person name="Puzos V."/>
            <person name="Ramezani Rad M."/>
            <person name="Rasmussen S.W."/>
            <person name="Remacha M.A."/>
            <person name="Revuelta J.L."/>
            <person name="Richard G.-F."/>
            <person name="Rieger M."/>
            <person name="Rodrigues-Pousada C."/>
            <person name="Rose M."/>
            <person name="Rupp T."/>
            <person name="Santos M.A."/>
            <person name="Schwager C."/>
            <person name="Sensen C."/>
            <person name="Skala J."/>
            <person name="Soares H."/>
            <person name="Sor F."/>
            <person name="Stegemann J."/>
            <person name="Tettelin H."/>
            <person name="Thierry A."/>
            <person name="Tzermia M."/>
            <person name="Urrestarazu L.A."/>
            <person name="van Dyck L."/>
            <person name="van Vliet-Reedijk J.C."/>
            <person name="Valens M."/>
            <person name="Vandenbol M."/>
            <person name="Vilela C."/>
            <person name="Vissers S."/>
            <person name="von Wettstein D."/>
            <person name="Voss H."/>
            <person name="Wiemann S."/>
            <person name="Xu G."/>
            <person name="Zimmermann J."/>
            <person name="Haasemann M."/>
            <person name="Becker I."/>
            <person name="Mewes H.-W."/>
        </authorList>
    </citation>
    <scope>NUCLEOTIDE SEQUENCE [LARGE SCALE GENOMIC DNA]</scope>
    <source>
        <strain>ATCC 204508 / S288c</strain>
    </source>
</reference>
<reference key="2">
    <citation type="journal article" date="2014" name="G3 (Bethesda)">
        <title>The reference genome sequence of Saccharomyces cerevisiae: Then and now.</title>
        <authorList>
            <person name="Engel S.R."/>
            <person name="Dietrich F.S."/>
            <person name="Fisk D.G."/>
            <person name="Binkley G."/>
            <person name="Balakrishnan R."/>
            <person name="Costanzo M.C."/>
            <person name="Dwight S.S."/>
            <person name="Hitz B.C."/>
            <person name="Karra K."/>
            <person name="Nash R.S."/>
            <person name="Weng S."/>
            <person name="Wong E.D."/>
            <person name="Lloyd P."/>
            <person name="Skrzypek M.S."/>
            <person name="Miyasato S.R."/>
            <person name="Simison M."/>
            <person name="Cherry J.M."/>
        </authorList>
    </citation>
    <scope>GENOME REANNOTATION</scope>
    <source>
        <strain>ATCC 204508 / S288c</strain>
    </source>
</reference>
<keyword id="KW-0378">Hydrolase</keyword>
<keyword id="KW-0645">Protease</keyword>
<keyword id="KW-1185">Reference proteome</keyword>
<keyword id="KW-0788">Thiol protease</keyword>
<keyword id="KW-0833">Ubl conjugation pathway</keyword>
<protein>
    <recommendedName>
        <fullName>Ubiquitin carboxyl-terminal hydrolase 11</fullName>
        <ecNumber>3.4.19.12</ecNumber>
    </recommendedName>
    <alternativeName>
        <fullName>Deubiquitinating enzyme 11</fullName>
    </alternativeName>
    <alternativeName>
        <fullName>Ubiquitin thioesterase 11</fullName>
    </alternativeName>
    <alternativeName>
        <fullName>Ubiquitin-specific-processing protease 11</fullName>
    </alternativeName>
</protein>
<feature type="chain" id="PRO_0000080596" description="Ubiquitin carboxyl-terminal hydrolase 11">
    <location>
        <begin position="1"/>
        <end position="717"/>
    </location>
</feature>
<feature type="domain" description="USP">
    <location>
        <begin position="298"/>
        <end position="707"/>
    </location>
</feature>
<feature type="region of interest" description="Disordered" evidence="3">
    <location>
        <begin position="231"/>
        <end position="268"/>
    </location>
</feature>
<feature type="region of interest" description="Disordered" evidence="3">
    <location>
        <begin position="531"/>
        <end position="577"/>
    </location>
</feature>
<feature type="compositionally biased region" description="Low complexity" evidence="3">
    <location>
        <begin position="242"/>
        <end position="257"/>
    </location>
</feature>
<feature type="compositionally biased region" description="Basic and acidic residues" evidence="3">
    <location>
        <begin position="258"/>
        <end position="268"/>
    </location>
</feature>
<feature type="compositionally biased region" description="Basic residues" evidence="3">
    <location>
        <begin position="549"/>
        <end position="564"/>
    </location>
</feature>
<feature type="active site" description="Nucleophile" evidence="1 2">
    <location>
        <position position="307"/>
    </location>
</feature>
<feature type="active site" description="Proton acceptor" evidence="1 2">
    <location>
        <position position="649"/>
    </location>
</feature>
<accession>P36026</accession>
<accession>D6VXF9</accession>
<gene>
    <name type="primary">UBP11</name>
    <name type="ordered locus">YKR098C</name>
</gene>
<name>UBP11_YEAST</name>
<dbReference type="EC" id="3.4.19.12"/>
<dbReference type="EMBL" id="Z28323">
    <property type="protein sequence ID" value="CAA82178.1"/>
    <property type="molecule type" value="Genomic_DNA"/>
</dbReference>
<dbReference type="EMBL" id="BK006944">
    <property type="protein sequence ID" value="DAA09249.1"/>
    <property type="molecule type" value="Genomic_DNA"/>
</dbReference>
<dbReference type="PIR" id="S38177">
    <property type="entry name" value="S38177"/>
</dbReference>
<dbReference type="RefSeq" id="NP_013024.1">
    <property type="nucleotide sequence ID" value="NM_001179888.1"/>
</dbReference>
<dbReference type="SMR" id="P36026"/>
<dbReference type="BioGRID" id="34229">
    <property type="interactions" value="79"/>
</dbReference>
<dbReference type="FunCoup" id="P36026">
    <property type="interactions" value="61"/>
</dbReference>
<dbReference type="IntAct" id="P36026">
    <property type="interactions" value="1"/>
</dbReference>
<dbReference type="MINT" id="P36026"/>
<dbReference type="STRING" id="4932.YKR098C"/>
<dbReference type="MEROPS" id="C19.102"/>
<dbReference type="iPTMnet" id="P36026"/>
<dbReference type="PaxDb" id="4932-YKR098C"/>
<dbReference type="PeptideAtlas" id="P36026"/>
<dbReference type="EnsemblFungi" id="YKR098C_mRNA">
    <property type="protein sequence ID" value="YKR098C"/>
    <property type="gene ID" value="YKR098C"/>
</dbReference>
<dbReference type="GeneID" id="853973"/>
<dbReference type="KEGG" id="sce:YKR098C"/>
<dbReference type="AGR" id="SGD:S000001806"/>
<dbReference type="SGD" id="S000001806">
    <property type="gene designation" value="UBP11"/>
</dbReference>
<dbReference type="VEuPathDB" id="FungiDB:YKR098C"/>
<dbReference type="eggNOG" id="KOG1868">
    <property type="taxonomic scope" value="Eukaryota"/>
</dbReference>
<dbReference type="GeneTree" id="ENSGT00940000168459"/>
<dbReference type="HOGENOM" id="CLU_004122_1_0_1"/>
<dbReference type="InParanoid" id="P36026"/>
<dbReference type="OMA" id="GICRTIK"/>
<dbReference type="OrthoDB" id="292964at2759"/>
<dbReference type="BioCyc" id="YEAST:G3O-32060-MONOMER"/>
<dbReference type="BioGRID-ORCS" id="853973">
    <property type="hits" value="0 hits in 10 CRISPR screens"/>
</dbReference>
<dbReference type="PRO" id="PR:P36026"/>
<dbReference type="Proteomes" id="UP000002311">
    <property type="component" value="Chromosome XI"/>
</dbReference>
<dbReference type="RNAct" id="P36026">
    <property type="molecule type" value="protein"/>
</dbReference>
<dbReference type="GO" id="GO:0005829">
    <property type="term" value="C:cytosol"/>
    <property type="evidence" value="ECO:0000318"/>
    <property type="project" value="GO_Central"/>
</dbReference>
<dbReference type="GO" id="GO:0005634">
    <property type="term" value="C:nucleus"/>
    <property type="evidence" value="ECO:0000318"/>
    <property type="project" value="GO_Central"/>
</dbReference>
<dbReference type="GO" id="GO:0004843">
    <property type="term" value="F:cysteine-type deubiquitinase activity"/>
    <property type="evidence" value="ECO:0000314"/>
    <property type="project" value="SGD"/>
</dbReference>
<dbReference type="GO" id="GO:0016579">
    <property type="term" value="P:protein deubiquitination"/>
    <property type="evidence" value="ECO:0007669"/>
    <property type="project" value="InterPro"/>
</dbReference>
<dbReference type="GO" id="GO:0006508">
    <property type="term" value="P:proteolysis"/>
    <property type="evidence" value="ECO:0007669"/>
    <property type="project" value="UniProtKB-KW"/>
</dbReference>
<dbReference type="GO" id="GO:0031647">
    <property type="term" value="P:regulation of protein stability"/>
    <property type="evidence" value="ECO:0000318"/>
    <property type="project" value="GO_Central"/>
</dbReference>
<dbReference type="FunFam" id="3.90.70.10:FF:000134">
    <property type="entry name" value="Ubiquitin-specific protease"/>
    <property type="match status" value="1"/>
</dbReference>
<dbReference type="Gene3D" id="3.90.70.10">
    <property type="entry name" value="Cysteine proteinases"/>
    <property type="match status" value="1"/>
</dbReference>
<dbReference type="InterPro" id="IPR038765">
    <property type="entry name" value="Papain-like_cys_pep_sf"/>
</dbReference>
<dbReference type="InterPro" id="IPR001394">
    <property type="entry name" value="Peptidase_C19_UCH"/>
</dbReference>
<dbReference type="InterPro" id="IPR050185">
    <property type="entry name" value="Ub_carboxyl-term_hydrolase"/>
</dbReference>
<dbReference type="InterPro" id="IPR018200">
    <property type="entry name" value="USP_CS"/>
</dbReference>
<dbReference type="InterPro" id="IPR028889">
    <property type="entry name" value="USP_dom"/>
</dbReference>
<dbReference type="PANTHER" id="PTHR21646">
    <property type="entry name" value="UBIQUITIN CARBOXYL-TERMINAL HYDROLASE"/>
    <property type="match status" value="1"/>
</dbReference>
<dbReference type="PANTHER" id="PTHR21646:SF24">
    <property type="entry name" value="UBIQUITIN CARBOXYL-TERMINAL HYDROLASE"/>
    <property type="match status" value="1"/>
</dbReference>
<dbReference type="Pfam" id="PF00443">
    <property type="entry name" value="UCH"/>
    <property type="match status" value="1"/>
</dbReference>
<dbReference type="SUPFAM" id="SSF54001">
    <property type="entry name" value="Cysteine proteinases"/>
    <property type="match status" value="1"/>
</dbReference>
<dbReference type="PROSITE" id="PS00972">
    <property type="entry name" value="USP_1"/>
    <property type="match status" value="1"/>
</dbReference>
<dbReference type="PROSITE" id="PS00973">
    <property type="entry name" value="USP_2"/>
    <property type="match status" value="1"/>
</dbReference>
<dbReference type="PROSITE" id="PS50235">
    <property type="entry name" value="USP_3"/>
    <property type="match status" value="1"/>
</dbReference>
<organism>
    <name type="scientific">Saccharomyces cerevisiae (strain ATCC 204508 / S288c)</name>
    <name type="common">Baker's yeast</name>
    <dbReference type="NCBI Taxonomy" id="559292"/>
    <lineage>
        <taxon>Eukaryota</taxon>
        <taxon>Fungi</taxon>
        <taxon>Dikarya</taxon>
        <taxon>Ascomycota</taxon>
        <taxon>Saccharomycotina</taxon>
        <taxon>Saccharomycetes</taxon>
        <taxon>Saccharomycetales</taxon>
        <taxon>Saccharomycetaceae</taxon>
        <taxon>Saccharomyces</taxon>
    </lineage>
</organism>
<comment type="catalytic activity">
    <reaction>
        <text>Thiol-dependent hydrolysis of ester, thioester, amide, peptide and isopeptide bonds formed by the C-terminal Gly of ubiquitin (a 76-residue protein attached to proteins as an intracellular targeting signal).</text>
        <dbReference type="EC" id="3.4.19.12"/>
    </reaction>
</comment>
<comment type="similarity">
    <text evidence="4">Belongs to the peptidase C19 family.</text>
</comment>